<protein>
    <recommendedName>
        <fullName>Protein P3</fullName>
    </recommendedName>
</protein>
<comment type="miscellaneous">
    <text>This protein is encoded from a satellite RNA, called RNA3.</text>
</comment>
<comment type="similarity">
    <text evidence="2">Belongs to the nepovirus protein P3 family.</text>
</comment>
<organism>
    <name type="scientific">Arabis mosaic virus large satellite RNA</name>
    <name type="common">Arabis mosaic virus satellite RNA</name>
    <dbReference type="NCBI Taxonomy" id="190809"/>
    <lineage>
        <taxon>Viruses</taxon>
        <taxon>unclassified Satellites</taxon>
        <taxon>RNA satellites</taxon>
        <taxon>Single stranded RNA satellites</taxon>
        <taxon>Large single stranded RNA satellites</taxon>
    </lineage>
</organism>
<evidence type="ECO:0000256" key="1">
    <source>
        <dbReference type="SAM" id="MobiDB-lite"/>
    </source>
</evidence>
<evidence type="ECO:0000305" key="2"/>
<sequence length="360" mass="38850">MDSHINANTSFSSPRVSVEILVPTKYAKLFTLKQLTRMLVLSCKHRARQAANPVSKRTSRDRDGSKIMGQGPPAVGPRVSKGHKQQSDGGASLAPVKSKRAVRREKRRCRKKGATKAGTTPVQKGGHCVHASKGQKQATYLSSLLSNPSGAKSRMGAVSKPPQTKNAPDASKGGFTLTAISPAECRKETARRFHPITGTFKGAPGFCTRSREGCGVCAACEAKLAQLGFDRSFDSIGTSRVIRVDSMKEETSDDMASPSATEPVGFWAPAEKQAPRWEGQPIKRCDVVTLARVTPVLRMLRKVDPTFVDNRLLWEAAHSDSFSSAQVRIPLVALATRGREDCCGTSFVYSLTQVGILVAL</sequence>
<name>VP3_ARMVT</name>
<feature type="chain" id="PRO_0000105574" description="Protein P3">
    <location>
        <begin position="1"/>
        <end position="360"/>
    </location>
</feature>
<feature type="region of interest" description="Disordered" evidence="1">
    <location>
        <begin position="46"/>
        <end position="128"/>
    </location>
</feature>
<feature type="region of interest" description="Disordered" evidence="1">
    <location>
        <begin position="151"/>
        <end position="175"/>
    </location>
</feature>
<feature type="compositionally biased region" description="Basic residues" evidence="1">
    <location>
        <begin position="97"/>
        <end position="114"/>
    </location>
</feature>
<accession>P24820</accession>
<proteinExistence type="inferred from homology"/>
<dbReference type="EMBL" id="D00664">
    <property type="protein sequence ID" value="BAA00564.1"/>
    <property type="molecule type" value="Genomic_RNA"/>
</dbReference>
<dbReference type="PIR" id="JQ0579">
    <property type="entry name" value="P3VVAM"/>
</dbReference>
<dbReference type="RefSeq" id="NP_612829.1">
    <property type="nucleotide sequence ID" value="NC_003523.1"/>
</dbReference>
<dbReference type="GeneID" id="935828"/>
<dbReference type="KEGG" id="vg:935828"/>
<dbReference type="Proteomes" id="UP000207753">
    <property type="component" value="Genome"/>
</dbReference>
<reference key="1">
    <citation type="journal article" date="1990" name="J. Gen. Virol.">
        <title>The nucleotide sequence of a satellite RNA associated with arabis mosaic nepovirus.</title>
        <authorList>
            <person name="Liu Y.Y."/>
            <person name="Hellen C.U.T."/>
            <person name="Cooper J.I."/>
            <person name="Bertioli D.J."/>
            <person name="Coates D."/>
            <person name="Bauer G."/>
        </authorList>
    </citation>
    <scope>NUCLEOTIDE SEQUENCE [GENOMIC RNA]</scope>
</reference>